<proteinExistence type="inferred from homology"/>
<dbReference type="EC" id="3.6.5.3" evidence="2"/>
<dbReference type="EMBL" id="AM181176">
    <property type="protein sequence ID" value="CAY52770.1"/>
    <property type="molecule type" value="Genomic_DNA"/>
</dbReference>
<dbReference type="RefSeq" id="WP_003176426.1">
    <property type="nucleotide sequence ID" value="NC_012660.1"/>
</dbReference>
<dbReference type="SMR" id="C3K2X8"/>
<dbReference type="STRING" id="294.SRM1_05194"/>
<dbReference type="GeneID" id="97827736"/>
<dbReference type="eggNOG" id="COG0050">
    <property type="taxonomic scope" value="Bacteria"/>
</dbReference>
<dbReference type="HOGENOM" id="CLU_007265_0_2_6"/>
<dbReference type="OrthoDB" id="9803139at2"/>
<dbReference type="GO" id="GO:0005829">
    <property type="term" value="C:cytosol"/>
    <property type="evidence" value="ECO:0007669"/>
    <property type="project" value="TreeGrafter"/>
</dbReference>
<dbReference type="GO" id="GO:0005525">
    <property type="term" value="F:GTP binding"/>
    <property type="evidence" value="ECO:0007669"/>
    <property type="project" value="UniProtKB-UniRule"/>
</dbReference>
<dbReference type="GO" id="GO:0003924">
    <property type="term" value="F:GTPase activity"/>
    <property type="evidence" value="ECO:0007669"/>
    <property type="project" value="InterPro"/>
</dbReference>
<dbReference type="GO" id="GO:0097216">
    <property type="term" value="F:guanosine tetraphosphate binding"/>
    <property type="evidence" value="ECO:0007669"/>
    <property type="project" value="UniProtKB-ARBA"/>
</dbReference>
<dbReference type="GO" id="GO:0003746">
    <property type="term" value="F:translation elongation factor activity"/>
    <property type="evidence" value="ECO:0007669"/>
    <property type="project" value="UniProtKB-UniRule"/>
</dbReference>
<dbReference type="CDD" id="cd01884">
    <property type="entry name" value="EF_Tu"/>
    <property type="match status" value="1"/>
</dbReference>
<dbReference type="CDD" id="cd03697">
    <property type="entry name" value="EFTU_II"/>
    <property type="match status" value="1"/>
</dbReference>
<dbReference type="CDD" id="cd03707">
    <property type="entry name" value="EFTU_III"/>
    <property type="match status" value="1"/>
</dbReference>
<dbReference type="FunFam" id="2.40.30.10:FF:000001">
    <property type="entry name" value="Elongation factor Tu"/>
    <property type="match status" value="1"/>
</dbReference>
<dbReference type="FunFam" id="3.40.50.300:FF:000003">
    <property type="entry name" value="Elongation factor Tu"/>
    <property type="match status" value="1"/>
</dbReference>
<dbReference type="Gene3D" id="3.40.50.300">
    <property type="entry name" value="P-loop containing nucleotide triphosphate hydrolases"/>
    <property type="match status" value="1"/>
</dbReference>
<dbReference type="Gene3D" id="2.40.30.10">
    <property type="entry name" value="Translation factors"/>
    <property type="match status" value="2"/>
</dbReference>
<dbReference type="HAMAP" id="MF_00118_B">
    <property type="entry name" value="EF_Tu_B"/>
    <property type="match status" value="1"/>
</dbReference>
<dbReference type="InterPro" id="IPR041709">
    <property type="entry name" value="EF-Tu_GTP-bd"/>
</dbReference>
<dbReference type="InterPro" id="IPR050055">
    <property type="entry name" value="EF-Tu_GTPase"/>
</dbReference>
<dbReference type="InterPro" id="IPR004161">
    <property type="entry name" value="EFTu-like_2"/>
</dbReference>
<dbReference type="InterPro" id="IPR033720">
    <property type="entry name" value="EFTU_2"/>
</dbReference>
<dbReference type="InterPro" id="IPR031157">
    <property type="entry name" value="G_TR_CS"/>
</dbReference>
<dbReference type="InterPro" id="IPR027417">
    <property type="entry name" value="P-loop_NTPase"/>
</dbReference>
<dbReference type="InterPro" id="IPR005225">
    <property type="entry name" value="Small_GTP-bd"/>
</dbReference>
<dbReference type="InterPro" id="IPR000795">
    <property type="entry name" value="T_Tr_GTP-bd_dom"/>
</dbReference>
<dbReference type="InterPro" id="IPR009000">
    <property type="entry name" value="Transl_B-barrel_sf"/>
</dbReference>
<dbReference type="InterPro" id="IPR009001">
    <property type="entry name" value="Transl_elong_EF1A/Init_IF2_C"/>
</dbReference>
<dbReference type="InterPro" id="IPR004541">
    <property type="entry name" value="Transl_elong_EFTu/EF1A_bac/org"/>
</dbReference>
<dbReference type="InterPro" id="IPR004160">
    <property type="entry name" value="Transl_elong_EFTu/EF1A_C"/>
</dbReference>
<dbReference type="NCBIfam" id="TIGR00485">
    <property type="entry name" value="EF-Tu"/>
    <property type="match status" value="1"/>
</dbReference>
<dbReference type="NCBIfam" id="NF000766">
    <property type="entry name" value="PRK00049.1"/>
    <property type="match status" value="1"/>
</dbReference>
<dbReference type="NCBIfam" id="NF009372">
    <property type="entry name" value="PRK12735.1"/>
    <property type="match status" value="1"/>
</dbReference>
<dbReference type="NCBIfam" id="NF009373">
    <property type="entry name" value="PRK12736.1"/>
    <property type="match status" value="1"/>
</dbReference>
<dbReference type="NCBIfam" id="TIGR00231">
    <property type="entry name" value="small_GTP"/>
    <property type="match status" value="1"/>
</dbReference>
<dbReference type="PANTHER" id="PTHR43721:SF22">
    <property type="entry name" value="ELONGATION FACTOR TU, MITOCHONDRIAL"/>
    <property type="match status" value="1"/>
</dbReference>
<dbReference type="PANTHER" id="PTHR43721">
    <property type="entry name" value="ELONGATION FACTOR TU-RELATED"/>
    <property type="match status" value="1"/>
</dbReference>
<dbReference type="Pfam" id="PF00009">
    <property type="entry name" value="GTP_EFTU"/>
    <property type="match status" value="1"/>
</dbReference>
<dbReference type="Pfam" id="PF03144">
    <property type="entry name" value="GTP_EFTU_D2"/>
    <property type="match status" value="1"/>
</dbReference>
<dbReference type="Pfam" id="PF03143">
    <property type="entry name" value="GTP_EFTU_D3"/>
    <property type="match status" value="1"/>
</dbReference>
<dbReference type="PRINTS" id="PR00315">
    <property type="entry name" value="ELONGATNFCT"/>
</dbReference>
<dbReference type="SUPFAM" id="SSF50465">
    <property type="entry name" value="EF-Tu/eEF-1alpha/eIF2-gamma C-terminal domain"/>
    <property type="match status" value="1"/>
</dbReference>
<dbReference type="SUPFAM" id="SSF52540">
    <property type="entry name" value="P-loop containing nucleoside triphosphate hydrolases"/>
    <property type="match status" value="1"/>
</dbReference>
<dbReference type="SUPFAM" id="SSF50447">
    <property type="entry name" value="Translation proteins"/>
    <property type="match status" value="1"/>
</dbReference>
<dbReference type="PROSITE" id="PS00301">
    <property type="entry name" value="G_TR_1"/>
    <property type="match status" value="1"/>
</dbReference>
<dbReference type="PROSITE" id="PS51722">
    <property type="entry name" value="G_TR_2"/>
    <property type="match status" value="1"/>
</dbReference>
<name>EFTU_PSEFS</name>
<keyword id="KW-0963">Cytoplasm</keyword>
<keyword id="KW-0251">Elongation factor</keyword>
<keyword id="KW-0342">GTP-binding</keyword>
<keyword id="KW-0378">Hydrolase</keyword>
<keyword id="KW-0460">Magnesium</keyword>
<keyword id="KW-0479">Metal-binding</keyword>
<keyword id="KW-0547">Nucleotide-binding</keyword>
<keyword id="KW-0648">Protein biosynthesis</keyword>
<comment type="function">
    <text evidence="2">GTP hydrolase that promotes the GTP-dependent binding of aminoacyl-tRNA to the A-site of ribosomes during protein biosynthesis.</text>
</comment>
<comment type="catalytic activity">
    <reaction evidence="2">
        <text>GTP + H2O = GDP + phosphate + H(+)</text>
        <dbReference type="Rhea" id="RHEA:19669"/>
        <dbReference type="ChEBI" id="CHEBI:15377"/>
        <dbReference type="ChEBI" id="CHEBI:15378"/>
        <dbReference type="ChEBI" id="CHEBI:37565"/>
        <dbReference type="ChEBI" id="CHEBI:43474"/>
        <dbReference type="ChEBI" id="CHEBI:58189"/>
        <dbReference type="EC" id="3.6.5.3"/>
    </reaction>
    <physiologicalReaction direction="left-to-right" evidence="2">
        <dbReference type="Rhea" id="RHEA:19670"/>
    </physiologicalReaction>
</comment>
<comment type="subunit">
    <text evidence="2">Monomer.</text>
</comment>
<comment type="subcellular location">
    <subcellularLocation>
        <location evidence="2">Cytoplasm</location>
    </subcellularLocation>
</comment>
<comment type="similarity">
    <text evidence="2">Belongs to the TRAFAC class translation factor GTPase superfamily. Classic translation factor GTPase family. EF-Tu/EF-1A subfamily.</text>
</comment>
<gene>
    <name evidence="2" type="primary">tuf</name>
    <name type="ordered locus">PFLU_5529</name>
</gene>
<sequence>MAKEKFDRSLPHVNVGTIGHVDHGKTTLTAALTRVCSEVFGSAIVDFDKIDSAPEEKARGITINTAHVEYNSLIRHYAHVDCPGHADYVKNMITGAAQMDGAILVCSAADGPMPQTREHILLSRQVGVPYIVVYLNKADLVDDAELLELVEMEVRDLLSTYDFPGDDTPIIIGSARMALEGKDDNEMGTTSVRKLVETLDSYIPDPVRVIDKPFLMPIEDVFSISGRGTVVTGRIERGIVKVQDPLEIVGLRDTTVTTCTGVEMFRKLLDEGRAGENCGVLLRGTKRDDVERGQVLVKPGSVKPHTKFEAEVYVLSKEEGGRHTPFFKGYRPQFYFRTTDVTGNCELPEGVEMVMPGDNIKMVVTLIKTIAMEDGLRFAIREGGRTVGAGVVAKIIE</sequence>
<feature type="chain" id="PRO_1000203017" description="Elongation factor Tu">
    <location>
        <begin position="1"/>
        <end position="397"/>
    </location>
</feature>
<feature type="domain" description="tr-type G">
    <location>
        <begin position="10"/>
        <end position="207"/>
    </location>
</feature>
<feature type="region of interest" description="G1" evidence="1">
    <location>
        <begin position="19"/>
        <end position="26"/>
    </location>
</feature>
<feature type="region of interest" description="G2" evidence="1">
    <location>
        <begin position="60"/>
        <end position="64"/>
    </location>
</feature>
<feature type="region of interest" description="G3" evidence="1">
    <location>
        <begin position="81"/>
        <end position="84"/>
    </location>
</feature>
<feature type="region of interest" description="G4" evidence="1">
    <location>
        <begin position="136"/>
        <end position="139"/>
    </location>
</feature>
<feature type="region of interest" description="G5" evidence="1">
    <location>
        <begin position="174"/>
        <end position="176"/>
    </location>
</feature>
<feature type="binding site" evidence="2">
    <location>
        <begin position="19"/>
        <end position="26"/>
    </location>
    <ligand>
        <name>GTP</name>
        <dbReference type="ChEBI" id="CHEBI:37565"/>
    </ligand>
</feature>
<feature type="binding site" evidence="2">
    <location>
        <position position="26"/>
    </location>
    <ligand>
        <name>Mg(2+)</name>
        <dbReference type="ChEBI" id="CHEBI:18420"/>
    </ligand>
</feature>
<feature type="binding site" evidence="2">
    <location>
        <begin position="81"/>
        <end position="85"/>
    </location>
    <ligand>
        <name>GTP</name>
        <dbReference type="ChEBI" id="CHEBI:37565"/>
    </ligand>
</feature>
<feature type="binding site" evidence="2">
    <location>
        <begin position="136"/>
        <end position="139"/>
    </location>
    <ligand>
        <name>GTP</name>
        <dbReference type="ChEBI" id="CHEBI:37565"/>
    </ligand>
</feature>
<evidence type="ECO:0000250" key="1"/>
<evidence type="ECO:0000255" key="2">
    <source>
        <dbReference type="HAMAP-Rule" id="MF_00118"/>
    </source>
</evidence>
<protein>
    <recommendedName>
        <fullName evidence="2">Elongation factor Tu</fullName>
        <shortName evidence="2">EF-Tu</shortName>
        <ecNumber evidence="2">3.6.5.3</ecNumber>
    </recommendedName>
</protein>
<organism>
    <name type="scientific">Pseudomonas fluorescens (strain SBW25)</name>
    <dbReference type="NCBI Taxonomy" id="216595"/>
    <lineage>
        <taxon>Bacteria</taxon>
        <taxon>Pseudomonadati</taxon>
        <taxon>Pseudomonadota</taxon>
        <taxon>Gammaproteobacteria</taxon>
        <taxon>Pseudomonadales</taxon>
        <taxon>Pseudomonadaceae</taxon>
        <taxon>Pseudomonas</taxon>
    </lineage>
</organism>
<accession>C3K2X8</accession>
<reference key="1">
    <citation type="journal article" date="2009" name="Genome Biol.">
        <title>Genomic and genetic analyses of diversity and plant interactions of Pseudomonas fluorescens.</title>
        <authorList>
            <person name="Silby M.W."/>
            <person name="Cerdeno-Tarraga A.M."/>
            <person name="Vernikos G.S."/>
            <person name="Giddens S.R."/>
            <person name="Jackson R.W."/>
            <person name="Preston G.M."/>
            <person name="Zhang X.-X."/>
            <person name="Moon C.D."/>
            <person name="Gehrig S.M."/>
            <person name="Godfrey S.A.C."/>
            <person name="Knight C.G."/>
            <person name="Malone J.G."/>
            <person name="Robinson Z."/>
            <person name="Spiers A.J."/>
            <person name="Harris S."/>
            <person name="Challis G.L."/>
            <person name="Yaxley A.M."/>
            <person name="Harris D."/>
            <person name="Seeger K."/>
            <person name="Murphy L."/>
            <person name="Rutter S."/>
            <person name="Squares R."/>
            <person name="Quail M.A."/>
            <person name="Saunders E."/>
            <person name="Mavromatis K."/>
            <person name="Brettin T.S."/>
            <person name="Bentley S.D."/>
            <person name="Hothersall J."/>
            <person name="Stephens E."/>
            <person name="Thomas C.M."/>
            <person name="Parkhill J."/>
            <person name="Levy S.B."/>
            <person name="Rainey P.B."/>
            <person name="Thomson N.R."/>
        </authorList>
    </citation>
    <scope>NUCLEOTIDE SEQUENCE [LARGE SCALE GENOMIC DNA]</scope>
    <source>
        <strain>SBW25</strain>
    </source>
</reference>